<sequence length="146" mass="16477">MNEELQNQFMALDVYNQQVQKLQEELSNIDLMIMELVRAIESMESLKTSGEIMLPLGAGSFVKADVKNPEKIILSVGVDVLLEKDVEEVILDFKNSLDELEKTKELITTQIQKTSKEVTRIRGELEKRAAAIEKQSQTKRGHSGSN</sequence>
<dbReference type="EMBL" id="CP000742">
    <property type="protein sequence ID" value="ABR54686.1"/>
    <property type="molecule type" value="Genomic_DNA"/>
</dbReference>
<dbReference type="RefSeq" id="WP_011972588.1">
    <property type="nucleotide sequence ID" value="NC_009634.1"/>
</dbReference>
<dbReference type="SMR" id="A6UQB4"/>
<dbReference type="STRING" id="406327.Mevan_0780"/>
<dbReference type="GeneID" id="5325201"/>
<dbReference type="KEGG" id="mvn:Mevan_0780"/>
<dbReference type="eggNOG" id="arCOG01341">
    <property type="taxonomic scope" value="Archaea"/>
</dbReference>
<dbReference type="HOGENOM" id="CLU_091867_1_2_2"/>
<dbReference type="OrthoDB" id="10045at2157"/>
<dbReference type="Proteomes" id="UP000001107">
    <property type="component" value="Chromosome"/>
</dbReference>
<dbReference type="GO" id="GO:0005737">
    <property type="term" value="C:cytoplasm"/>
    <property type="evidence" value="ECO:0007669"/>
    <property type="project" value="UniProtKB-SubCell"/>
</dbReference>
<dbReference type="GO" id="GO:0016272">
    <property type="term" value="C:prefoldin complex"/>
    <property type="evidence" value="ECO:0007669"/>
    <property type="project" value="UniProtKB-UniRule"/>
</dbReference>
<dbReference type="GO" id="GO:0051082">
    <property type="term" value="F:unfolded protein binding"/>
    <property type="evidence" value="ECO:0007669"/>
    <property type="project" value="UniProtKB-UniRule"/>
</dbReference>
<dbReference type="GO" id="GO:0006457">
    <property type="term" value="P:protein folding"/>
    <property type="evidence" value="ECO:0007669"/>
    <property type="project" value="UniProtKB-UniRule"/>
</dbReference>
<dbReference type="CDD" id="cd23160">
    <property type="entry name" value="Prefoldin_alpha_GimC"/>
    <property type="match status" value="1"/>
</dbReference>
<dbReference type="Gene3D" id="1.10.287.370">
    <property type="match status" value="1"/>
</dbReference>
<dbReference type="HAMAP" id="MF_00308">
    <property type="entry name" value="PfdA"/>
    <property type="match status" value="1"/>
</dbReference>
<dbReference type="InterPro" id="IPR011599">
    <property type="entry name" value="PFD_alpha_archaea"/>
</dbReference>
<dbReference type="InterPro" id="IPR009053">
    <property type="entry name" value="Prefoldin"/>
</dbReference>
<dbReference type="InterPro" id="IPR004127">
    <property type="entry name" value="Prefoldin_subunit_alpha"/>
</dbReference>
<dbReference type="NCBIfam" id="TIGR00293">
    <property type="entry name" value="prefoldin subunit alpha"/>
    <property type="match status" value="1"/>
</dbReference>
<dbReference type="Pfam" id="PF02996">
    <property type="entry name" value="Prefoldin"/>
    <property type="match status" value="1"/>
</dbReference>
<dbReference type="SUPFAM" id="SSF46579">
    <property type="entry name" value="Prefoldin"/>
    <property type="match status" value="1"/>
</dbReference>
<comment type="function">
    <text evidence="1">Molecular chaperone capable of stabilizing a range of proteins. Seems to fulfill an ATP-independent, HSP70-like function in archaeal de novo protein folding.</text>
</comment>
<comment type="subunit">
    <text evidence="1">Heterohexamer of two alpha and four beta subunits.</text>
</comment>
<comment type="subcellular location">
    <subcellularLocation>
        <location evidence="1">Cytoplasm</location>
    </subcellularLocation>
</comment>
<comment type="similarity">
    <text evidence="1">Belongs to the prefoldin alpha subunit family.</text>
</comment>
<protein>
    <recommendedName>
        <fullName evidence="1">Prefoldin subunit alpha</fullName>
    </recommendedName>
    <alternativeName>
        <fullName evidence="1">GimC subunit alpha</fullName>
    </alternativeName>
</protein>
<keyword id="KW-0143">Chaperone</keyword>
<keyword id="KW-0963">Cytoplasm</keyword>
<gene>
    <name evidence="1" type="primary">pfdA</name>
    <name type="ordered locus">Mevan_0780</name>
</gene>
<reference key="1">
    <citation type="submission" date="2007-06" db="EMBL/GenBank/DDBJ databases">
        <title>Complete sequence of Methanococcus vannielii SB.</title>
        <authorList>
            <consortium name="US DOE Joint Genome Institute"/>
            <person name="Copeland A."/>
            <person name="Lucas S."/>
            <person name="Lapidus A."/>
            <person name="Barry K."/>
            <person name="Glavina del Rio T."/>
            <person name="Dalin E."/>
            <person name="Tice H."/>
            <person name="Pitluck S."/>
            <person name="Chain P."/>
            <person name="Malfatti S."/>
            <person name="Shin M."/>
            <person name="Vergez L."/>
            <person name="Schmutz J."/>
            <person name="Larimer F."/>
            <person name="Land M."/>
            <person name="Hauser L."/>
            <person name="Kyrpides N."/>
            <person name="Anderson I."/>
            <person name="Sieprawska-Lupa M."/>
            <person name="Whitman W.B."/>
            <person name="Richardson P."/>
        </authorList>
    </citation>
    <scope>NUCLEOTIDE SEQUENCE [LARGE SCALE GENOMIC DNA]</scope>
    <source>
        <strain>ATCC 35089 / DSM 1224 / JCM 13029 / OCM 148 / SB</strain>
    </source>
</reference>
<organism>
    <name type="scientific">Methanococcus vannielii (strain ATCC 35089 / DSM 1224 / JCM 13029 / OCM 148 / SB)</name>
    <dbReference type="NCBI Taxonomy" id="406327"/>
    <lineage>
        <taxon>Archaea</taxon>
        <taxon>Methanobacteriati</taxon>
        <taxon>Methanobacteriota</taxon>
        <taxon>Methanomada group</taxon>
        <taxon>Methanococci</taxon>
        <taxon>Methanococcales</taxon>
        <taxon>Methanococcaceae</taxon>
        <taxon>Methanococcus</taxon>
    </lineage>
</organism>
<accession>A6UQB4</accession>
<name>PFDA_METVS</name>
<proteinExistence type="inferred from homology"/>
<feature type="chain" id="PRO_1000022800" description="Prefoldin subunit alpha">
    <location>
        <begin position="1"/>
        <end position="146"/>
    </location>
</feature>
<evidence type="ECO:0000255" key="1">
    <source>
        <dbReference type="HAMAP-Rule" id="MF_00308"/>
    </source>
</evidence>